<sequence length="125" mass="13984">MRVLASHKHERTAQAIKEAVAAIISREVKDPRLGFVSVTKVDLARDLSQAKIYISVYGSEEDKKNSFIALNSAKGFIKGELASRVRLRIMPELYFVEDPSIEYGARIMEILEGLKKEAGENESES</sequence>
<keyword id="KW-0963">Cytoplasm</keyword>
<keyword id="KW-1185">Reference proteome</keyword>
<keyword id="KW-0690">Ribosome biogenesis</keyword>
<protein>
    <recommendedName>
        <fullName evidence="1">Ribosome-binding factor A</fullName>
    </recommendedName>
</protein>
<proteinExistence type="inferred from homology"/>
<accession>Q3AB99</accession>
<feature type="chain" id="PRO_0000321211" description="Ribosome-binding factor A">
    <location>
        <begin position="1"/>
        <end position="125"/>
    </location>
</feature>
<evidence type="ECO:0000255" key="1">
    <source>
        <dbReference type="HAMAP-Rule" id="MF_00003"/>
    </source>
</evidence>
<name>RBFA_CARHZ</name>
<reference key="1">
    <citation type="journal article" date="2005" name="PLoS Genet.">
        <title>Life in hot carbon monoxide: the complete genome sequence of Carboxydothermus hydrogenoformans Z-2901.</title>
        <authorList>
            <person name="Wu M."/>
            <person name="Ren Q."/>
            <person name="Durkin A.S."/>
            <person name="Daugherty S.C."/>
            <person name="Brinkac L.M."/>
            <person name="Dodson R.J."/>
            <person name="Madupu R."/>
            <person name="Sullivan S.A."/>
            <person name="Kolonay J.F."/>
            <person name="Nelson W.C."/>
            <person name="Tallon L.J."/>
            <person name="Jones K.M."/>
            <person name="Ulrich L.E."/>
            <person name="Gonzalez J.M."/>
            <person name="Zhulin I.B."/>
            <person name="Robb F.T."/>
            <person name="Eisen J.A."/>
        </authorList>
    </citation>
    <scope>NUCLEOTIDE SEQUENCE [LARGE SCALE GENOMIC DNA]</scope>
    <source>
        <strain>ATCC BAA-161 / DSM 6008 / Z-2901</strain>
    </source>
</reference>
<gene>
    <name evidence="1" type="primary">rbfA</name>
    <name type="ordered locus">CHY_1765</name>
</gene>
<dbReference type="EMBL" id="CP000141">
    <property type="protein sequence ID" value="ABB14547.1"/>
    <property type="molecule type" value="Genomic_DNA"/>
</dbReference>
<dbReference type="RefSeq" id="WP_011344659.1">
    <property type="nucleotide sequence ID" value="NC_007503.1"/>
</dbReference>
<dbReference type="SMR" id="Q3AB99"/>
<dbReference type="FunCoup" id="Q3AB99">
    <property type="interactions" value="396"/>
</dbReference>
<dbReference type="STRING" id="246194.CHY_1765"/>
<dbReference type="KEGG" id="chy:CHY_1765"/>
<dbReference type="eggNOG" id="COG0858">
    <property type="taxonomic scope" value="Bacteria"/>
</dbReference>
<dbReference type="HOGENOM" id="CLU_089475_6_3_9"/>
<dbReference type="InParanoid" id="Q3AB99"/>
<dbReference type="OrthoDB" id="307788at2"/>
<dbReference type="Proteomes" id="UP000002706">
    <property type="component" value="Chromosome"/>
</dbReference>
<dbReference type="GO" id="GO:0005829">
    <property type="term" value="C:cytosol"/>
    <property type="evidence" value="ECO:0007669"/>
    <property type="project" value="TreeGrafter"/>
</dbReference>
<dbReference type="GO" id="GO:0043024">
    <property type="term" value="F:ribosomal small subunit binding"/>
    <property type="evidence" value="ECO:0007669"/>
    <property type="project" value="TreeGrafter"/>
</dbReference>
<dbReference type="GO" id="GO:0030490">
    <property type="term" value="P:maturation of SSU-rRNA"/>
    <property type="evidence" value="ECO:0007669"/>
    <property type="project" value="UniProtKB-UniRule"/>
</dbReference>
<dbReference type="Gene3D" id="3.30.300.20">
    <property type="match status" value="1"/>
</dbReference>
<dbReference type="HAMAP" id="MF_00003">
    <property type="entry name" value="RbfA"/>
    <property type="match status" value="1"/>
</dbReference>
<dbReference type="InterPro" id="IPR015946">
    <property type="entry name" value="KH_dom-like_a/b"/>
</dbReference>
<dbReference type="InterPro" id="IPR000238">
    <property type="entry name" value="RbfA"/>
</dbReference>
<dbReference type="InterPro" id="IPR023799">
    <property type="entry name" value="RbfA_dom_sf"/>
</dbReference>
<dbReference type="InterPro" id="IPR020053">
    <property type="entry name" value="Ribosome-bd_factorA_CS"/>
</dbReference>
<dbReference type="NCBIfam" id="TIGR00082">
    <property type="entry name" value="rbfA"/>
    <property type="match status" value="1"/>
</dbReference>
<dbReference type="PANTHER" id="PTHR33515">
    <property type="entry name" value="RIBOSOME-BINDING FACTOR A, CHLOROPLASTIC-RELATED"/>
    <property type="match status" value="1"/>
</dbReference>
<dbReference type="PANTHER" id="PTHR33515:SF1">
    <property type="entry name" value="RIBOSOME-BINDING FACTOR A, CHLOROPLASTIC-RELATED"/>
    <property type="match status" value="1"/>
</dbReference>
<dbReference type="Pfam" id="PF02033">
    <property type="entry name" value="RBFA"/>
    <property type="match status" value="1"/>
</dbReference>
<dbReference type="SUPFAM" id="SSF89919">
    <property type="entry name" value="Ribosome-binding factor A, RbfA"/>
    <property type="match status" value="1"/>
</dbReference>
<dbReference type="PROSITE" id="PS01319">
    <property type="entry name" value="RBFA"/>
    <property type="match status" value="1"/>
</dbReference>
<organism>
    <name type="scientific">Carboxydothermus hydrogenoformans (strain ATCC BAA-161 / DSM 6008 / Z-2901)</name>
    <dbReference type="NCBI Taxonomy" id="246194"/>
    <lineage>
        <taxon>Bacteria</taxon>
        <taxon>Bacillati</taxon>
        <taxon>Bacillota</taxon>
        <taxon>Clostridia</taxon>
        <taxon>Thermoanaerobacterales</taxon>
        <taxon>Thermoanaerobacteraceae</taxon>
        <taxon>Carboxydothermus</taxon>
    </lineage>
</organism>
<comment type="function">
    <text evidence="1">One of several proteins that assist in the late maturation steps of the functional core of the 30S ribosomal subunit. Associates with free 30S ribosomal subunits (but not with 30S subunits that are part of 70S ribosomes or polysomes). Required for efficient processing of 16S rRNA. May interact with the 5'-terminal helix region of 16S rRNA.</text>
</comment>
<comment type="subunit">
    <text evidence="1">Monomer. Binds 30S ribosomal subunits, but not 50S ribosomal subunits or 70S ribosomes.</text>
</comment>
<comment type="subcellular location">
    <subcellularLocation>
        <location evidence="1">Cytoplasm</location>
    </subcellularLocation>
</comment>
<comment type="similarity">
    <text evidence="1">Belongs to the RbfA family.</text>
</comment>